<accession>Q0HJ59</accession>
<dbReference type="EMBL" id="CP000446">
    <property type="protein sequence ID" value="ABI38908.1"/>
    <property type="molecule type" value="Genomic_DNA"/>
</dbReference>
<dbReference type="RefSeq" id="WP_011622605.1">
    <property type="nucleotide sequence ID" value="NC_008321.1"/>
</dbReference>
<dbReference type="SMR" id="Q0HJ59"/>
<dbReference type="GeneID" id="94727841"/>
<dbReference type="KEGG" id="she:Shewmr4_1834"/>
<dbReference type="HOGENOM" id="CLU_137946_0_0_6"/>
<dbReference type="GO" id="GO:0022625">
    <property type="term" value="C:cytosolic large ribosomal subunit"/>
    <property type="evidence" value="ECO:0007669"/>
    <property type="project" value="TreeGrafter"/>
</dbReference>
<dbReference type="GO" id="GO:0008097">
    <property type="term" value="F:5S rRNA binding"/>
    <property type="evidence" value="ECO:0007669"/>
    <property type="project" value="InterPro"/>
</dbReference>
<dbReference type="GO" id="GO:0003735">
    <property type="term" value="F:structural constituent of ribosome"/>
    <property type="evidence" value="ECO:0007669"/>
    <property type="project" value="InterPro"/>
</dbReference>
<dbReference type="GO" id="GO:0006412">
    <property type="term" value="P:translation"/>
    <property type="evidence" value="ECO:0007669"/>
    <property type="project" value="UniProtKB-UniRule"/>
</dbReference>
<dbReference type="CDD" id="cd00495">
    <property type="entry name" value="Ribosomal_L25_TL5_CTC"/>
    <property type="match status" value="1"/>
</dbReference>
<dbReference type="FunFam" id="2.40.240.10:FF:000002">
    <property type="entry name" value="50S ribosomal protein L25"/>
    <property type="match status" value="1"/>
</dbReference>
<dbReference type="Gene3D" id="2.40.240.10">
    <property type="entry name" value="Ribosomal Protein L25, Chain P"/>
    <property type="match status" value="1"/>
</dbReference>
<dbReference type="HAMAP" id="MF_01336">
    <property type="entry name" value="Ribosomal_bL25"/>
    <property type="match status" value="1"/>
</dbReference>
<dbReference type="InterPro" id="IPR020056">
    <property type="entry name" value="Rbsml_bL25/Gln-tRNA_synth_N"/>
</dbReference>
<dbReference type="InterPro" id="IPR011035">
    <property type="entry name" value="Ribosomal_bL25/Gln-tRNA_synth"/>
</dbReference>
<dbReference type="InterPro" id="IPR001021">
    <property type="entry name" value="Ribosomal_bL25_long"/>
</dbReference>
<dbReference type="InterPro" id="IPR020055">
    <property type="entry name" value="Ribosomal_bL25_short"/>
</dbReference>
<dbReference type="InterPro" id="IPR029751">
    <property type="entry name" value="Ribosomal_L25_dom"/>
</dbReference>
<dbReference type="InterPro" id="IPR020930">
    <property type="entry name" value="Ribosomal_uL5_bac-type"/>
</dbReference>
<dbReference type="NCBIfam" id="TIGR00731">
    <property type="entry name" value="bL25_bact_ctc"/>
    <property type="match status" value="1"/>
</dbReference>
<dbReference type="NCBIfam" id="NF004612">
    <property type="entry name" value="PRK05943.1"/>
    <property type="match status" value="1"/>
</dbReference>
<dbReference type="PANTHER" id="PTHR33284">
    <property type="entry name" value="RIBOSOMAL PROTEIN L25/GLN-TRNA SYNTHETASE, ANTI-CODON-BINDING DOMAIN-CONTAINING PROTEIN"/>
    <property type="match status" value="1"/>
</dbReference>
<dbReference type="PANTHER" id="PTHR33284:SF1">
    <property type="entry name" value="RIBOSOMAL PROTEIN L25_GLN-TRNA SYNTHETASE, ANTI-CODON-BINDING DOMAIN-CONTAINING PROTEIN"/>
    <property type="match status" value="1"/>
</dbReference>
<dbReference type="Pfam" id="PF01386">
    <property type="entry name" value="Ribosomal_L25p"/>
    <property type="match status" value="1"/>
</dbReference>
<dbReference type="SUPFAM" id="SSF50715">
    <property type="entry name" value="Ribosomal protein L25-like"/>
    <property type="match status" value="1"/>
</dbReference>
<organism>
    <name type="scientific">Shewanella sp. (strain MR-4)</name>
    <dbReference type="NCBI Taxonomy" id="60480"/>
    <lineage>
        <taxon>Bacteria</taxon>
        <taxon>Pseudomonadati</taxon>
        <taxon>Pseudomonadota</taxon>
        <taxon>Gammaproteobacteria</taxon>
        <taxon>Alteromonadales</taxon>
        <taxon>Shewanellaceae</taxon>
        <taxon>Shewanella</taxon>
    </lineage>
</organism>
<keyword id="KW-0687">Ribonucleoprotein</keyword>
<keyword id="KW-0689">Ribosomal protein</keyword>
<keyword id="KW-0694">RNA-binding</keyword>
<keyword id="KW-0699">rRNA-binding</keyword>
<evidence type="ECO:0000255" key="1">
    <source>
        <dbReference type="HAMAP-Rule" id="MF_01336"/>
    </source>
</evidence>
<evidence type="ECO:0000305" key="2"/>
<feature type="chain" id="PRO_1000052969" description="Large ribosomal subunit protein bL25">
    <location>
        <begin position="1"/>
        <end position="95"/>
    </location>
</feature>
<name>RL25_SHESM</name>
<proteinExistence type="inferred from homology"/>
<reference key="1">
    <citation type="submission" date="2006-08" db="EMBL/GenBank/DDBJ databases">
        <title>Complete sequence of Shewanella sp. MR-4.</title>
        <authorList>
            <consortium name="US DOE Joint Genome Institute"/>
            <person name="Copeland A."/>
            <person name="Lucas S."/>
            <person name="Lapidus A."/>
            <person name="Barry K."/>
            <person name="Detter J.C."/>
            <person name="Glavina del Rio T."/>
            <person name="Hammon N."/>
            <person name="Israni S."/>
            <person name="Dalin E."/>
            <person name="Tice H."/>
            <person name="Pitluck S."/>
            <person name="Kiss H."/>
            <person name="Brettin T."/>
            <person name="Bruce D."/>
            <person name="Han C."/>
            <person name="Tapia R."/>
            <person name="Gilna P."/>
            <person name="Schmutz J."/>
            <person name="Larimer F."/>
            <person name="Land M."/>
            <person name="Hauser L."/>
            <person name="Kyrpides N."/>
            <person name="Mikhailova N."/>
            <person name="Nealson K."/>
            <person name="Konstantinidis K."/>
            <person name="Klappenbach J."/>
            <person name="Tiedje J."/>
            <person name="Richardson P."/>
        </authorList>
    </citation>
    <scope>NUCLEOTIDE SEQUENCE [LARGE SCALE GENOMIC DNA]</scope>
    <source>
        <strain>MR-4</strain>
    </source>
</reference>
<protein>
    <recommendedName>
        <fullName evidence="1">Large ribosomal subunit protein bL25</fullName>
    </recommendedName>
    <alternativeName>
        <fullName evidence="2">50S ribosomal protein L25</fullName>
    </alternativeName>
</protein>
<sequence>MSYTIQAQTRTEIGKGSSRRLRHAGKVPAVIYGAGKEPVSIVFDHKDIINIQTNEDFYTSVVTIVLDGKEVGVRAQAMQRHAFKPMIEHVDFVYA</sequence>
<gene>
    <name evidence="1" type="primary">rplY</name>
    <name type="ordered locus">Shewmr4_1834</name>
</gene>
<comment type="function">
    <text evidence="1">This is one of the proteins that binds to the 5S RNA in the ribosome where it forms part of the central protuberance.</text>
</comment>
<comment type="subunit">
    <text evidence="1">Part of the 50S ribosomal subunit; part of the 5S rRNA/L5/L18/L25 subcomplex. Contacts the 5S rRNA. Binds to the 5S rRNA independently of L5 and L18.</text>
</comment>
<comment type="similarity">
    <text evidence="1">Belongs to the bacterial ribosomal protein bL25 family.</text>
</comment>